<reference key="1">
    <citation type="journal article" date="1983" name="J. Mol. Biol.">
        <title>Complete nucleotide sequence of bacteriophage T7 DNA and the locations of T7 genetic elements.</title>
        <authorList>
            <person name="Dunn J.J."/>
            <person name="Studier F.W."/>
        </authorList>
    </citation>
    <scope>NUCLEOTIDE SEQUENCE [LARGE SCALE GENOMIC DNA]</scope>
</reference>
<accession>P03786</accession>
<keyword id="KW-1185">Reference proteome</keyword>
<feature type="chain" id="PRO_0000106496" description="Protein 4.7">
    <location>
        <begin position="1"/>
        <end position="135"/>
    </location>
</feature>
<protein>
    <recommendedName>
        <fullName>Protein 4.7</fullName>
    </recommendedName>
    <alternativeName>
        <fullName>Gene product 4.7</fullName>
        <shortName>Gp4.7</shortName>
    </alternativeName>
</protein>
<name>Y47_BPT7</name>
<organismHost>
    <name type="scientific">Escherichia coli</name>
    <dbReference type="NCBI Taxonomy" id="562"/>
</organismHost>
<sequence length="135" mass="15209">MRDPKVIQAEIAKLEAELEDVKYHEAKTRSAVHILKNLGWTWTRQTGWKKPEVTKLSHKVFDKDTMTHIKAGDWVKVDMGVVGGYGYVRSVSGKYAQVSYITGVTPRGAIVADKTNMIHTGFLTVVSYEEIVKSR</sequence>
<gene>
    <name type="ordered locus">4.7</name>
</gene>
<dbReference type="EMBL" id="V01146">
    <property type="protein sequence ID" value="CAA24411.1"/>
    <property type="molecule type" value="Genomic_DNA"/>
</dbReference>
<dbReference type="PIR" id="A04411">
    <property type="entry name" value="W4BP77"/>
</dbReference>
<dbReference type="RefSeq" id="NP_041981.1">
    <property type="nucleotide sequence ID" value="NC_001604.1"/>
</dbReference>
<dbReference type="SMR" id="P03786"/>
<dbReference type="IntAct" id="P03786">
    <property type="interactions" value="2"/>
</dbReference>
<dbReference type="MINT" id="P03786"/>
<dbReference type="KEGG" id="vg:1261043"/>
<dbReference type="OrthoDB" id="15826at10239"/>
<dbReference type="Proteomes" id="UP000000840">
    <property type="component" value="Genome"/>
</dbReference>
<proteinExistence type="predicted"/>
<organism>
    <name type="scientific">Escherichia phage T7</name>
    <name type="common">Bacteriophage T7</name>
    <dbReference type="NCBI Taxonomy" id="10760"/>
    <lineage>
        <taxon>Viruses</taxon>
        <taxon>Duplodnaviria</taxon>
        <taxon>Heunggongvirae</taxon>
        <taxon>Uroviricota</taxon>
        <taxon>Caudoviricetes</taxon>
        <taxon>Autographiviridae</taxon>
        <taxon>Studiervirinae</taxon>
        <taxon>Teseptimavirus</taxon>
        <taxon>Teseptimavirus T7</taxon>
    </lineage>
</organism>